<accession>B2K4B3</accession>
<dbReference type="EC" id="3.6.4.-" evidence="1"/>
<dbReference type="EMBL" id="CP001048">
    <property type="protein sequence ID" value="ACC87666.1"/>
    <property type="molecule type" value="Genomic_DNA"/>
</dbReference>
<dbReference type="RefSeq" id="WP_011191719.1">
    <property type="nucleotide sequence ID" value="NZ_CP009780.1"/>
</dbReference>
<dbReference type="SMR" id="B2K4B3"/>
<dbReference type="GeneID" id="49787339"/>
<dbReference type="KEGG" id="ypb:YPTS_0682"/>
<dbReference type="PATRIC" id="fig|502801.10.peg.9"/>
<dbReference type="GO" id="GO:0005524">
    <property type="term" value="F:ATP binding"/>
    <property type="evidence" value="ECO:0007669"/>
    <property type="project" value="UniProtKB-UniRule"/>
</dbReference>
<dbReference type="GO" id="GO:0003677">
    <property type="term" value="F:DNA binding"/>
    <property type="evidence" value="ECO:0007669"/>
    <property type="project" value="UniProtKB-KW"/>
</dbReference>
<dbReference type="GO" id="GO:0004386">
    <property type="term" value="F:helicase activity"/>
    <property type="evidence" value="ECO:0007669"/>
    <property type="project" value="UniProtKB-UniRule"/>
</dbReference>
<dbReference type="GO" id="GO:0016817">
    <property type="term" value="F:hydrolase activity, acting on acid anhydrides"/>
    <property type="evidence" value="ECO:0007669"/>
    <property type="project" value="InterPro"/>
</dbReference>
<dbReference type="GO" id="GO:0006355">
    <property type="term" value="P:regulation of DNA-templated transcription"/>
    <property type="evidence" value="ECO:0007669"/>
    <property type="project" value="UniProtKB-UniRule"/>
</dbReference>
<dbReference type="CDD" id="cd18011">
    <property type="entry name" value="DEXDc_RapA"/>
    <property type="match status" value="1"/>
</dbReference>
<dbReference type="CDD" id="cd18793">
    <property type="entry name" value="SF2_C_SNF"/>
    <property type="match status" value="1"/>
</dbReference>
<dbReference type="FunFam" id="3.40.50.10810:FF:000012">
    <property type="entry name" value="RNA polymerase-associated protein RapA"/>
    <property type="match status" value="1"/>
</dbReference>
<dbReference type="Gene3D" id="2.30.30.140">
    <property type="match status" value="1"/>
</dbReference>
<dbReference type="Gene3D" id="2.30.30.930">
    <property type="match status" value="1"/>
</dbReference>
<dbReference type="Gene3D" id="3.30.360.80">
    <property type="match status" value="1"/>
</dbReference>
<dbReference type="Gene3D" id="6.10.140.1500">
    <property type="match status" value="1"/>
</dbReference>
<dbReference type="Gene3D" id="6.10.140.2230">
    <property type="match status" value="1"/>
</dbReference>
<dbReference type="Gene3D" id="3.40.50.300">
    <property type="entry name" value="P-loop containing nucleotide triphosphate hydrolases"/>
    <property type="match status" value="1"/>
</dbReference>
<dbReference type="Gene3D" id="3.40.50.10810">
    <property type="entry name" value="Tandem AAA-ATPase domain"/>
    <property type="match status" value="1"/>
</dbReference>
<dbReference type="HAMAP" id="MF_01821">
    <property type="entry name" value="Helicase_RapA"/>
    <property type="match status" value="1"/>
</dbReference>
<dbReference type="InterPro" id="IPR014001">
    <property type="entry name" value="Helicase_ATP-bd"/>
</dbReference>
<dbReference type="InterPro" id="IPR001650">
    <property type="entry name" value="Helicase_C-like"/>
</dbReference>
<dbReference type="InterPro" id="IPR023949">
    <property type="entry name" value="Helicase_RapA"/>
</dbReference>
<dbReference type="InterPro" id="IPR027417">
    <property type="entry name" value="P-loop_NTPase"/>
</dbReference>
<dbReference type="InterPro" id="IPR022737">
    <property type="entry name" value="RapA_C"/>
</dbReference>
<dbReference type="InterPro" id="IPR038718">
    <property type="entry name" value="SNF2-like_sf"/>
</dbReference>
<dbReference type="InterPro" id="IPR049730">
    <property type="entry name" value="SNF2/RAD54-like_C"/>
</dbReference>
<dbReference type="InterPro" id="IPR000330">
    <property type="entry name" value="SNF2_N"/>
</dbReference>
<dbReference type="InterPro" id="IPR040765">
    <property type="entry name" value="Tudor_1_RapA"/>
</dbReference>
<dbReference type="InterPro" id="IPR040766">
    <property type="entry name" value="Tudor_2_RapA"/>
</dbReference>
<dbReference type="NCBIfam" id="NF003426">
    <property type="entry name" value="PRK04914.1"/>
    <property type="match status" value="1"/>
</dbReference>
<dbReference type="PANTHER" id="PTHR45766">
    <property type="entry name" value="DNA ANNEALING HELICASE AND ENDONUCLEASE ZRANB3 FAMILY MEMBER"/>
    <property type="match status" value="1"/>
</dbReference>
<dbReference type="PANTHER" id="PTHR45766:SF6">
    <property type="entry name" value="SWI_SNF-RELATED MATRIX-ASSOCIATED ACTIN-DEPENDENT REGULATOR OF CHROMATIN SUBFAMILY A-LIKE PROTEIN 1"/>
    <property type="match status" value="1"/>
</dbReference>
<dbReference type="Pfam" id="PF00271">
    <property type="entry name" value="Helicase_C"/>
    <property type="match status" value="1"/>
</dbReference>
<dbReference type="Pfam" id="PF12137">
    <property type="entry name" value="RapA_C"/>
    <property type="match status" value="1"/>
</dbReference>
<dbReference type="Pfam" id="PF00176">
    <property type="entry name" value="SNF2-rel_dom"/>
    <property type="match status" value="1"/>
</dbReference>
<dbReference type="Pfam" id="PF18339">
    <property type="entry name" value="Tudor_1_RapA"/>
    <property type="match status" value="1"/>
</dbReference>
<dbReference type="Pfam" id="PF18337">
    <property type="entry name" value="Tudor_RapA"/>
    <property type="match status" value="1"/>
</dbReference>
<dbReference type="SMART" id="SM00487">
    <property type="entry name" value="DEXDc"/>
    <property type="match status" value="1"/>
</dbReference>
<dbReference type="SMART" id="SM00490">
    <property type="entry name" value="HELICc"/>
    <property type="match status" value="1"/>
</dbReference>
<dbReference type="SUPFAM" id="SSF52540">
    <property type="entry name" value="P-loop containing nucleoside triphosphate hydrolases"/>
    <property type="match status" value="2"/>
</dbReference>
<dbReference type="PROSITE" id="PS51192">
    <property type="entry name" value="HELICASE_ATP_BIND_1"/>
    <property type="match status" value="1"/>
</dbReference>
<dbReference type="PROSITE" id="PS51194">
    <property type="entry name" value="HELICASE_CTER"/>
    <property type="match status" value="1"/>
</dbReference>
<organism>
    <name type="scientific">Yersinia pseudotuberculosis serotype IB (strain PB1/+)</name>
    <dbReference type="NCBI Taxonomy" id="502801"/>
    <lineage>
        <taxon>Bacteria</taxon>
        <taxon>Pseudomonadati</taxon>
        <taxon>Pseudomonadota</taxon>
        <taxon>Gammaproteobacteria</taxon>
        <taxon>Enterobacterales</taxon>
        <taxon>Yersiniaceae</taxon>
        <taxon>Yersinia</taxon>
    </lineage>
</organism>
<name>RAPA_YERPB</name>
<evidence type="ECO:0000255" key="1">
    <source>
        <dbReference type="HAMAP-Rule" id="MF_01821"/>
    </source>
</evidence>
<gene>
    <name evidence="1" type="primary">rapA</name>
    <name type="ordered locus">YPTS_0682</name>
</gene>
<feature type="chain" id="PRO_1000188198" description="RNA polymerase-associated protein RapA">
    <location>
        <begin position="1"/>
        <end position="968"/>
    </location>
</feature>
<feature type="domain" description="Helicase ATP-binding" evidence="1">
    <location>
        <begin position="164"/>
        <end position="334"/>
    </location>
</feature>
<feature type="domain" description="Helicase C-terminal" evidence="1">
    <location>
        <begin position="490"/>
        <end position="644"/>
    </location>
</feature>
<feature type="short sequence motif" description="DEAH box">
    <location>
        <begin position="280"/>
        <end position="283"/>
    </location>
</feature>
<feature type="binding site" evidence="1">
    <location>
        <begin position="177"/>
        <end position="184"/>
    </location>
    <ligand>
        <name>ATP</name>
        <dbReference type="ChEBI" id="CHEBI:30616"/>
    </ligand>
</feature>
<comment type="function">
    <text evidence="1">Transcription regulator that activates transcription by stimulating RNA polymerase (RNAP) recycling in case of stress conditions such as supercoiled DNA or high salt concentrations. Probably acts by releasing the RNAP, when it is trapped or immobilized on tightly supercoiled DNA. Does not activate transcription on linear DNA. Probably not involved in DNA repair.</text>
</comment>
<comment type="subunit">
    <text evidence="1">Interacts with the RNAP. Has a higher affinity for the core RNAP than for the holoenzyme. Its ATPase activity is stimulated by binding to RNAP.</text>
</comment>
<comment type="similarity">
    <text evidence="1">Belongs to the SNF2/RAD54 helicase family. RapA subfamily.</text>
</comment>
<sequence length="968" mass="110109">MPFTLGQRWISDTESELGLGTVVAIDVRMITLLFPATGENRLYARNDSPITRVMFNPSDTITHHEGWQLKVEEVTQENGLITYIGTRLDTEETGVAMREVLLDSKLTFSKPQDRLFAGQIDRMDRFALRFRARKYQSEQFRLPWSGLRGIRASLIPHQLHIAYEVGQRHAPRVLLADEVGLGKTIEAGMIIHQQLLAGRAERVLIVVPESLQHQWLVEMLRRFNLRFSLFDDSRYSEALLDSSNPFDTEQMVICSLDFVRRNKQRLEQLADASWDLLVVDEAHHLAWSEEAPSREYQVIEQLAEHIPGVLLLTATPEQLGQQSHFARLRLLDPDRFHDYEEFVNEQQKYRPIADAVTLLLGGERLTDDKLNLLGELIDEQDIEPLLKAANSQSEDSEAARQELVTMLMDRHGTSRVLFRNTRNGVKGFPHRVLHQIKLPLPTQYQTAIKVSGIMGAKKTLDARAKDMLYPEQIYQEFEGENATWWNFDPRVEWLLNYLVANRGEKVLVICAQAATALQLEQVLREREAIRAAVFHEGLSLIERDRAAAYFASEEDGAQVLLCSEIGSEGRNFQFACQLVMFDLPFNPDLLEQRIGRLDRIGQNREIQIMVPYLEDTAQAILVRWYHEGLDAFEHTCPTGRTIYDSSYQELISYLATPSEQEGLDEFIHTCRQQHEGLKLQLEQGRDRLLEMHSNGGEHGQELAQSIAEQDNDINLVSFALNLFDIVGINQEDRSDNLIVLTPSDHMLVPDFPGLPPDGCTVTFDREQALSREDAQFVSWEHPIIRNGLDLILSGDTGSCAVSLLKNKALPVGTLLAELVYVVEAQAPKHLQLTRFLPPTPVRMLMDRNGTNLAAQVEFESFNRQLNAVNRHTSSKLVNAVQQEVHTMLQQAEALVEAQAQALIETAKREADDKLSTELARLEALKAVNPNIRDDEIEALEHNRKMVLENLNQAGWRLDAIRLVVVTHQ</sequence>
<reference key="1">
    <citation type="submission" date="2008-04" db="EMBL/GenBank/DDBJ databases">
        <title>Complete sequence of Yersinia pseudotuberculosis PB1/+.</title>
        <authorList>
            <person name="Copeland A."/>
            <person name="Lucas S."/>
            <person name="Lapidus A."/>
            <person name="Glavina del Rio T."/>
            <person name="Dalin E."/>
            <person name="Tice H."/>
            <person name="Bruce D."/>
            <person name="Goodwin L."/>
            <person name="Pitluck S."/>
            <person name="Munk A.C."/>
            <person name="Brettin T."/>
            <person name="Detter J.C."/>
            <person name="Han C."/>
            <person name="Tapia R."/>
            <person name="Schmutz J."/>
            <person name="Larimer F."/>
            <person name="Land M."/>
            <person name="Hauser L."/>
            <person name="Challacombe J.F."/>
            <person name="Green L."/>
            <person name="Lindler L.E."/>
            <person name="Nikolich M.P."/>
            <person name="Richardson P."/>
        </authorList>
    </citation>
    <scope>NUCLEOTIDE SEQUENCE [LARGE SCALE GENOMIC DNA]</scope>
    <source>
        <strain>PB1/+</strain>
    </source>
</reference>
<protein>
    <recommendedName>
        <fullName evidence="1">RNA polymerase-associated protein RapA</fullName>
        <ecNumber evidence="1">3.6.4.-</ecNumber>
    </recommendedName>
    <alternativeName>
        <fullName evidence="1">ATP-dependent helicase HepA</fullName>
    </alternativeName>
</protein>
<keyword id="KW-0010">Activator</keyword>
<keyword id="KW-0067">ATP-binding</keyword>
<keyword id="KW-0238">DNA-binding</keyword>
<keyword id="KW-0347">Helicase</keyword>
<keyword id="KW-0378">Hydrolase</keyword>
<keyword id="KW-0547">Nucleotide-binding</keyword>
<keyword id="KW-0804">Transcription</keyword>
<keyword id="KW-0805">Transcription regulation</keyword>
<proteinExistence type="inferred from homology"/>